<proteinExistence type="inferred from homology"/>
<reference key="1">
    <citation type="journal article" date="2014" name="Stand. Genomic Sci.">
        <title>Complete genome sequence of Anabaena variabilis ATCC 29413.</title>
        <authorList>
            <person name="Thiel T."/>
            <person name="Pratte B.S."/>
            <person name="Zhong J."/>
            <person name="Goodwin L."/>
            <person name="Copeland A."/>
            <person name="Lucas S."/>
            <person name="Han C."/>
            <person name="Pitluck S."/>
            <person name="Land M.L."/>
            <person name="Kyrpides N.C."/>
            <person name="Woyke T."/>
        </authorList>
    </citation>
    <scope>NUCLEOTIDE SEQUENCE [LARGE SCALE GENOMIC DNA]</scope>
    <source>
        <strain>ATCC 29413 / PCC 7937</strain>
    </source>
</reference>
<sequence>MPRTQKNDNFVDKSFTVMADIILKILPTNKKAKEAFVYYRDGMSAQAEGEYAEALEYYEEALTLEEDTNDRGYILYNMGLIYASNGDHDKALELYHQAIELNPRLPQALNNIAVIYHYKGEKAKEDGDHDGGEALFDQAADYWIRAIRMAPNNYIEAQNWLKTTGRMQIDVFF</sequence>
<accession>Q3M690</accession>
<keyword id="KW-0472">Membrane</keyword>
<keyword id="KW-0602">Photosynthesis</keyword>
<keyword id="KW-0677">Repeat</keyword>
<keyword id="KW-0793">Thylakoid</keyword>
<keyword id="KW-0802">TPR repeat</keyword>
<evidence type="ECO:0000255" key="1">
    <source>
        <dbReference type="HAMAP-Rule" id="MF_00439"/>
    </source>
</evidence>
<evidence type="ECO:0000305" key="2"/>
<protein>
    <recommendedName>
        <fullName evidence="1">Photosystem I assembly protein Ycf3</fullName>
    </recommendedName>
</protein>
<dbReference type="EMBL" id="CP000117">
    <property type="protein sequence ID" value="ABA23496.1"/>
    <property type="status" value="ALT_INIT"/>
    <property type="molecule type" value="Genomic_DNA"/>
</dbReference>
<dbReference type="SMR" id="Q3M690"/>
<dbReference type="STRING" id="240292.Ava_3891"/>
<dbReference type="KEGG" id="ava:Ava_3891"/>
<dbReference type="eggNOG" id="COG0457">
    <property type="taxonomic scope" value="Bacteria"/>
</dbReference>
<dbReference type="HOGENOM" id="CLU_141248_0_0_3"/>
<dbReference type="Proteomes" id="UP000002533">
    <property type="component" value="Chromosome"/>
</dbReference>
<dbReference type="GO" id="GO:0031676">
    <property type="term" value="C:plasma membrane-derived thylakoid membrane"/>
    <property type="evidence" value="ECO:0007669"/>
    <property type="project" value="UniProtKB-SubCell"/>
</dbReference>
<dbReference type="GO" id="GO:0015979">
    <property type="term" value="P:photosynthesis"/>
    <property type="evidence" value="ECO:0007669"/>
    <property type="project" value="UniProtKB-UniRule"/>
</dbReference>
<dbReference type="Gene3D" id="1.25.40.10">
    <property type="entry name" value="Tetratricopeptide repeat domain"/>
    <property type="match status" value="1"/>
</dbReference>
<dbReference type="HAMAP" id="MF_00439">
    <property type="entry name" value="Ycf3"/>
    <property type="match status" value="1"/>
</dbReference>
<dbReference type="InterPro" id="IPR022818">
    <property type="entry name" value="PSI_Ycf3_assembly"/>
</dbReference>
<dbReference type="InterPro" id="IPR011990">
    <property type="entry name" value="TPR-like_helical_dom_sf"/>
</dbReference>
<dbReference type="InterPro" id="IPR019734">
    <property type="entry name" value="TPR_rpt"/>
</dbReference>
<dbReference type="InterPro" id="IPR051685">
    <property type="entry name" value="Ycf3/AcsC/BcsC/TPR_MFPF"/>
</dbReference>
<dbReference type="NCBIfam" id="NF002725">
    <property type="entry name" value="PRK02603.1"/>
    <property type="match status" value="1"/>
</dbReference>
<dbReference type="PANTHER" id="PTHR44943">
    <property type="entry name" value="CELLULOSE SYNTHASE OPERON PROTEIN C"/>
    <property type="match status" value="1"/>
</dbReference>
<dbReference type="PANTHER" id="PTHR44943:SF8">
    <property type="entry name" value="TPR REPEAT-CONTAINING PROTEIN MJ0263"/>
    <property type="match status" value="1"/>
</dbReference>
<dbReference type="Pfam" id="PF00515">
    <property type="entry name" value="TPR_1"/>
    <property type="match status" value="2"/>
</dbReference>
<dbReference type="SMART" id="SM00028">
    <property type="entry name" value="TPR"/>
    <property type="match status" value="3"/>
</dbReference>
<dbReference type="SUPFAM" id="SSF48452">
    <property type="entry name" value="TPR-like"/>
    <property type="match status" value="1"/>
</dbReference>
<dbReference type="PROSITE" id="PS50005">
    <property type="entry name" value="TPR"/>
    <property type="match status" value="3"/>
</dbReference>
<dbReference type="PROSITE" id="PS50293">
    <property type="entry name" value="TPR_REGION"/>
    <property type="match status" value="1"/>
</dbReference>
<gene>
    <name evidence="1" type="primary">ycf3</name>
    <name type="ordered locus">Ava_3891</name>
</gene>
<comment type="function">
    <text evidence="1">Essential for the assembly of the photosystem I (PSI) complex. May act as a chaperone-like factor to guide the assembly of the PSI subunits.</text>
</comment>
<comment type="subcellular location">
    <subcellularLocation>
        <location evidence="1">Cellular thylakoid membrane</location>
        <topology evidence="1">Peripheral membrane protein</topology>
    </subcellularLocation>
</comment>
<comment type="similarity">
    <text evidence="1">Belongs to the Ycf3 family.</text>
</comment>
<comment type="sequence caution" evidence="2">
    <conflict type="erroneous initiation">
        <sequence resource="EMBL-CDS" id="ABA23496"/>
    </conflict>
</comment>
<name>YCF3_TRIV2</name>
<feature type="chain" id="PRO_0000325040" description="Photosystem I assembly protein Ycf3">
    <location>
        <begin position="1"/>
        <end position="173"/>
    </location>
</feature>
<feature type="repeat" description="TPR 1">
    <location>
        <begin position="35"/>
        <end position="68"/>
    </location>
</feature>
<feature type="repeat" description="TPR 2">
    <location>
        <begin position="72"/>
        <end position="105"/>
    </location>
</feature>
<feature type="repeat" description="TPR 3">
    <location>
        <begin position="120"/>
        <end position="153"/>
    </location>
</feature>
<organism>
    <name type="scientific">Trichormus variabilis (strain ATCC 29413 / PCC 7937)</name>
    <name type="common">Anabaena variabilis</name>
    <dbReference type="NCBI Taxonomy" id="240292"/>
    <lineage>
        <taxon>Bacteria</taxon>
        <taxon>Bacillati</taxon>
        <taxon>Cyanobacteriota</taxon>
        <taxon>Cyanophyceae</taxon>
        <taxon>Nostocales</taxon>
        <taxon>Nostocaceae</taxon>
        <taxon>Trichormus</taxon>
    </lineage>
</organism>